<feature type="chain" id="PRO_0000128859" description="4-hydroxy-3-methylbut-2-enyl diphosphate reductase">
    <location>
        <begin position="1"/>
        <end position="180" status="greater than"/>
    </location>
</feature>
<feature type="active site" description="Proton donor" evidence="1">
    <location>
        <position position="126"/>
    </location>
</feature>
<feature type="binding site" evidence="1">
    <location>
        <position position="12"/>
    </location>
    <ligand>
        <name>[4Fe-4S] cluster</name>
        <dbReference type="ChEBI" id="CHEBI:49883"/>
    </ligand>
</feature>
<feature type="binding site" evidence="1">
    <location>
        <position position="41"/>
    </location>
    <ligand>
        <name>(2E)-4-hydroxy-3-methylbut-2-enyl diphosphate</name>
        <dbReference type="ChEBI" id="CHEBI:128753"/>
    </ligand>
</feature>
<feature type="binding site" evidence="1">
    <location>
        <position position="41"/>
    </location>
    <ligand>
        <name>dimethylallyl diphosphate</name>
        <dbReference type="ChEBI" id="CHEBI:57623"/>
    </ligand>
</feature>
<feature type="binding site" evidence="1">
    <location>
        <position position="41"/>
    </location>
    <ligand>
        <name>isopentenyl diphosphate</name>
        <dbReference type="ChEBI" id="CHEBI:128769"/>
    </ligand>
</feature>
<feature type="binding site" evidence="1">
    <location>
        <position position="74"/>
    </location>
    <ligand>
        <name>(2E)-4-hydroxy-3-methylbut-2-enyl diphosphate</name>
        <dbReference type="ChEBI" id="CHEBI:128753"/>
    </ligand>
</feature>
<feature type="binding site" evidence="1">
    <location>
        <position position="74"/>
    </location>
    <ligand>
        <name>dimethylallyl diphosphate</name>
        <dbReference type="ChEBI" id="CHEBI:57623"/>
    </ligand>
</feature>
<feature type="binding site" evidence="1">
    <location>
        <position position="74"/>
    </location>
    <ligand>
        <name>isopentenyl diphosphate</name>
        <dbReference type="ChEBI" id="CHEBI:128769"/>
    </ligand>
</feature>
<feature type="binding site" evidence="1">
    <location>
        <position position="96"/>
    </location>
    <ligand>
        <name>[4Fe-4S] cluster</name>
        <dbReference type="ChEBI" id="CHEBI:49883"/>
    </ligand>
</feature>
<feature type="binding site" evidence="1">
    <location>
        <position position="124"/>
    </location>
    <ligand>
        <name>(2E)-4-hydroxy-3-methylbut-2-enyl diphosphate</name>
        <dbReference type="ChEBI" id="CHEBI:128753"/>
    </ligand>
</feature>
<feature type="binding site" evidence="1">
    <location>
        <position position="124"/>
    </location>
    <ligand>
        <name>dimethylallyl diphosphate</name>
        <dbReference type="ChEBI" id="CHEBI:57623"/>
    </ligand>
</feature>
<feature type="binding site" evidence="1">
    <location>
        <position position="124"/>
    </location>
    <ligand>
        <name>isopentenyl diphosphate</name>
        <dbReference type="ChEBI" id="CHEBI:128769"/>
    </ligand>
</feature>
<feature type="binding site" evidence="1">
    <location>
        <position position="168"/>
    </location>
    <ligand>
        <name>(2E)-4-hydroxy-3-methylbut-2-enyl diphosphate</name>
        <dbReference type="ChEBI" id="CHEBI:128753"/>
    </ligand>
</feature>
<feature type="non-terminal residue">
    <location>
        <position position="180"/>
    </location>
</feature>
<keyword id="KW-0004">4Fe-4S</keyword>
<keyword id="KW-0408">Iron</keyword>
<keyword id="KW-0411">Iron-sulfur</keyword>
<keyword id="KW-0414">Isoprene biosynthesis</keyword>
<keyword id="KW-0479">Metal-binding</keyword>
<keyword id="KW-0560">Oxidoreductase</keyword>
<accession>P21864</accession>
<proteinExistence type="inferred from homology"/>
<name>ISPH_PSEFL</name>
<gene>
    <name evidence="1" type="primary">ispH</name>
    <name type="synonym">lytB</name>
</gene>
<comment type="function">
    <text evidence="1">Catalyzes the conversion of 1-hydroxy-2-methyl-2-(E)-butenyl 4-diphosphate (HMBPP) into a mixture of isopentenyl diphosphate (IPP) and dimethylallyl diphosphate (DMAPP). Acts in the terminal step of the DOXP/MEP pathway for isoprenoid precursor biosynthesis.</text>
</comment>
<comment type="catalytic activity">
    <reaction evidence="1">
        <text>isopentenyl diphosphate + 2 oxidized [2Fe-2S]-[ferredoxin] + H2O = (2E)-4-hydroxy-3-methylbut-2-enyl diphosphate + 2 reduced [2Fe-2S]-[ferredoxin] + 2 H(+)</text>
        <dbReference type="Rhea" id="RHEA:24488"/>
        <dbReference type="Rhea" id="RHEA-COMP:10000"/>
        <dbReference type="Rhea" id="RHEA-COMP:10001"/>
        <dbReference type="ChEBI" id="CHEBI:15377"/>
        <dbReference type="ChEBI" id="CHEBI:15378"/>
        <dbReference type="ChEBI" id="CHEBI:33737"/>
        <dbReference type="ChEBI" id="CHEBI:33738"/>
        <dbReference type="ChEBI" id="CHEBI:128753"/>
        <dbReference type="ChEBI" id="CHEBI:128769"/>
        <dbReference type="EC" id="1.17.7.4"/>
    </reaction>
</comment>
<comment type="catalytic activity">
    <reaction evidence="1">
        <text>dimethylallyl diphosphate + 2 oxidized [2Fe-2S]-[ferredoxin] + H2O = (2E)-4-hydroxy-3-methylbut-2-enyl diphosphate + 2 reduced [2Fe-2S]-[ferredoxin] + 2 H(+)</text>
        <dbReference type="Rhea" id="RHEA:24825"/>
        <dbReference type="Rhea" id="RHEA-COMP:10000"/>
        <dbReference type="Rhea" id="RHEA-COMP:10001"/>
        <dbReference type="ChEBI" id="CHEBI:15377"/>
        <dbReference type="ChEBI" id="CHEBI:15378"/>
        <dbReference type="ChEBI" id="CHEBI:33737"/>
        <dbReference type="ChEBI" id="CHEBI:33738"/>
        <dbReference type="ChEBI" id="CHEBI:57623"/>
        <dbReference type="ChEBI" id="CHEBI:128753"/>
        <dbReference type="EC" id="1.17.7.4"/>
    </reaction>
</comment>
<comment type="cofactor">
    <cofactor evidence="1">
        <name>[4Fe-4S] cluster</name>
        <dbReference type="ChEBI" id="CHEBI:49883"/>
    </cofactor>
    <text evidence="1">Binds 1 [4Fe-4S] cluster per subunit.</text>
</comment>
<comment type="pathway">
    <text evidence="1">Isoprenoid biosynthesis; dimethylallyl diphosphate biosynthesis; dimethylallyl diphosphate from (2E)-4-hydroxy-3-methylbutenyl diphosphate: step 1/1.</text>
</comment>
<comment type="pathway">
    <text evidence="1">Isoprenoid biosynthesis; isopentenyl diphosphate biosynthesis via DXP pathway; isopentenyl diphosphate from 1-deoxy-D-xylulose 5-phosphate: step 6/6.</text>
</comment>
<comment type="similarity">
    <text evidence="1 2">Belongs to the IspH family.</text>
</comment>
<sequence>MQIKLANPRGFCAGVDRAIEIVNRALEVFGPPIYVRHEVVHNKFVVEDLRARGAIFVEELDQVKDDVIVIFSAHGVSQAVRTEAAGRGLKVFDATCPLVTKVHIEVARYSRDGRECILIGHAGHPEVEGTMGQYDASNGGAIYLVEDEKDVANLQVHNPERLAFVTQTTLSMDDTSRVID</sequence>
<evidence type="ECO:0000255" key="1">
    <source>
        <dbReference type="HAMAP-Rule" id="MF_00191"/>
    </source>
</evidence>
<evidence type="ECO:0000305" key="2"/>
<protein>
    <recommendedName>
        <fullName evidence="1">4-hydroxy-3-methylbut-2-enyl diphosphate reductase</fullName>
        <shortName evidence="1">HMBPP reductase</shortName>
        <ecNumber evidence="1">1.17.7.4</ecNumber>
    </recommendedName>
</protein>
<dbReference type="EC" id="1.17.7.4" evidence="1"/>
<dbReference type="EMBL" id="M35366">
    <property type="protein sequence ID" value="AAA25886.1"/>
    <property type="molecule type" value="Genomic_DNA"/>
</dbReference>
<dbReference type="PIR" id="D37152">
    <property type="entry name" value="D37152"/>
</dbReference>
<dbReference type="SMR" id="P21864"/>
<dbReference type="eggNOG" id="COG0761">
    <property type="taxonomic scope" value="Bacteria"/>
</dbReference>
<dbReference type="UniPathway" id="UPA00056">
    <property type="reaction ID" value="UER00097"/>
</dbReference>
<dbReference type="UniPathway" id="UPA00059">
    <property type="reaction ID" value="UER00105"/>
</dbReference>
<dbReference type="GO" id="GO:0051539">
    <property type="term" value="F:4 iron, 4 sulfur cluster binding"/>
    <property type="evidence" value="ECO:0007669"/>
    <property type="project" value="UniProtKB-KW"/>
</dbReference>
<dbReference type="GO" id="GO:0051745">
    <property type="term" value="F:4-hydroxy-3-methylbut-2-enyl diphosphate reductase activity"/>
    <property type="evidence" value="ECO:0007669"/>
    <property type="project" value="UniProtKB-EC"/>
</dbReference>
<dbReference type="GO" id="GO:0046872">
    <property type="term" value="F:metal ion binding"/>
    <property type="evidence" value="ECO:0007669"/>
    <property type="project" value="UniProtKB-KW"/>
</dbReference>
<dbReference type="GO" id="GO:0050992">
    <property type="term" value="P:dimethylallyl diphosphate biosynthetic process"/>
    <property type="evidence" value="ECO:0007669"/>
    <property type="project" value="UniProtKB-UniPathway"/>
</dbReference>
<dbReference type="GO" id="GO:0019288">
    <property type="term" value="P:isopentenyl diphosphate biosynthetic process, methylerythritol 4-phosphate pathway"/>
    <property type="evidence" value="ECO:0007669"/>
    <property type="project" value="UniProtKB-UniPathway"/>
</dbReference>
<dbReference type="CDD" id="cd13944">
    <property type="entry name" value="lytB_ispH"/>
    <property type="match status" value="1"/>
</dbReference>
<dbReference type="Gene3D" id="3.40.50.11270">
    <property type="match status" value="1"/>
</dbReference>
<dbReference type="Gene3D" id="3.40.1010.20">
    <property type="entry name" value="4-hydroxy-3-methylbut-2-enyl diphosphate reductase, catalytic domain"/>
    <property type="match status" value="1"/>
</dbReference>
<dbReference type="InterPro" id="IPR003451">
    <property type="entry name" value="LytB/IspH"/>
</dbReference>
<dbReference type="NCBIfam" id="TIGR00216">
    <property type="entry name" value="ispH_lytB"/>
    <property type="match status" value="1"/>
</dbReference>
<dbReference type="PANTHER" id="PTHR30426">
    <property type="entry name" value="4-HYDROXY-3-METHYLBUT-2-ENYL DIPHOSPHATE REDUCTASE"/>
    <property type="match status" value="1"/>
</dbReference>
<dbReference type="PANTHER" id="PTHR30426:SF0">
    <property type="entry name" value="4-HYDROXY-3-METHYLBUT-2-ENYL DIPHOSPHATE REDUCTASE"/>
    <property type="match status" value="1"/>
</dbReference>
<dbReference type="Pfam" id="PF02401">
    <property type="entry name" value="LYTB"/>
    <property type="match status" value="1"/>
</dbReference>
<reference key="1">
    <citation type="journal article" date="1990" name="J. Bacteriol.">
        <title>Nucleotide sequence of the Pseudomonas fluorescens signal peptidase II gene (lsp) and flanking genes.</title>
        <authorList>
            <person name="Isaki L."/>
            <person name="Beers R."/>
            <person name="Wu H.C."/>
        </authorList>
    </citation>
    <scope>NUCLEOTIDE SEQUENCE [GENOMIC DNA]</scope>
    <source>
        <strain>ATCC 49323 / NCIMB 10586</strain>
    </source>
</reference>
<organism>
    <name type="scientific">Pseudomonas fluorescens</name>
    <dbReference type="NCBI Taxonomy" id="294"/>
    <lineage>
        <taxon>Bacteria</taxon>
        <taxon>Pseudomonadati</taxon>
        <taxon>Pseudomonadota</taxon>
        <taxon>Gammaproteobacteria</taxon>
        <taxon>Pseudomonadales</taxon>
        <taxon>Pseudomonadaceae</taxon>
        <taxon>Pseudomonas</taxon>
    </lineage>
</organism>